<evidence type="ECO:0000250" key="1"/>
<evidence type="ECO:0000250" key="2">
    <source>
        <dbReference type="UniProtKB" id="P42127"/>
    </source>
</evidence>
<evidence type="ECO:0000250" key="3">
    <source>
        <dbReference type="UniProtKB" id="Q03288"/>
    </source>
</evidence>
<evidence type="ECO:0000255" key="4"/>
<evidence type="ECO:0000255" key="5">
    <source>
        <dbReference type="PROSITE-ProRule" id="PRU00494"/>
    </source>
</evidence>
<evidence type="ECO:0000256" key="6">
    <source>
        <dbReference type="SAM" id="MobiDB-lite"/>
    </source>
</evidence>
<proteinExistence type="inferred from homology"/>
<protein>
    <recommendedName>
        <fullName>Agouti-signaling protein</fullName>
        <shortName>ASP</shortName>
    </recommendedName>
    <alternativeName>
        <fullName>Agouti switch protein</fullName>
    </alternativeName>
</protein>
<comment type="function">
    <text evidence="3">Involved in the regulation of melanogenesis. The binding of ASP to MC1R precludes alpha-MSH initiated signaling and thus blocks production of cAMP, leading to a down-regulation of eumelanogenesis (brown/black pigment) and thus increasing synthesis of pheomelanin (yellow/red pigment) (By similarity).</text>
</comment>
<comment type="subcellular location">
    <subcellularLocation>
        <location evidence="2">Secreted</location>
    </subcellularLocation>
</comment>
<comment type="domain">
    <text evidence="1">The presence of a 'disulfide through disulfide knot' structurally defines this protein as a knottin.</text>
</comment>
<organism>
    <name type="scientific">Macaca sinica</name>
    <name type="common">Toque macaque</name>
    <name type="synonym">Toque monkey</name>
    <dbReference type="NCBI Taxonomy" id="9552"/>
    <lineage>
        <taxon>Eukaryota</taxon>
        <taxon>Metazoa</taxon>
        <taxon>Chordata</taxon>
        <taxon>Craniata</taxon>
        <taxon>Vertebrata</taxon>
        <taxon>Euteleostomi</taxon>
        <taxon>Mammalia</taxon>
        <taxon>Eutheria</taxon>
        <taxon>Euarchontoglires</taxon>
        <taxon>Primates</taxon>
        <taxon>Haplorrhini</taxon>
        <taxon>Catarrhini</taxon>
        <taxon>Cercopithecidae</taxon>
        <taxon>Cercopithecinae</taxon>
        <taxon>Macaca</taxon>
    </lineage>
</organism>
<sequence length="132" mass="14657">MDVTRLLLATLLVFLCFFTAYSHPPPEEKLRDDRSLRSNSSVNLLDFPSVSIVALNKKSKQISRKEAEKKRSSKKEASMKKVARPRTPLSAPCVATRDSCKPPAPACCDPCASCQCRFFRSACSCRVLSLNC</sequence>
<dbReference type="EMBL" id="AB299218">
    <property type="protein sequence ID" value="BAF80802.1"/>
    <property type="molecule type" value="Genomic_DNA"/>
</dbReference>
<dbReference type="GlyCosmos" id="A8CEN1">
    <property type="glycosylation" value="1 site, No reported glycans"/>
</dbReference>
<dbReference type="GO" id="GO:0005615">
    <property type="term" value="C:extracellular space"/>
    <property type="evidence" value="ECO:0000250"/>
    <property type="project" value="UniProtKB"/>
</dbReference>
<dbReference type="GO" id="GO:0031779">
    <property type="term" value="F:melanocortin receptor binding"/>
    <property type="evidence" value="ECO:0007669"/>
    <property type="project" value="TreeGrafter"/>
</dbReference>
<dbReference type="GO" id="GO:0005184">
    <property type="term" value="F:neuropeptide hormone activity"/>
    <property type="evidence" value="ECO:0007669"/>
    <property type="project" value="TreeGrafter"/>
</dbReference>
<dbReference type="GO" id="GO:0009755">
    <property type="term" value="P:hormone-mediated signaling pathway"/>
    <property type="evidence" value="ECO:0007669"/>
    <property type="project" value="InterPro"/>
</dbReference>
<dbReference type="GO" id="GO:0042438">
    <property type="term" value="P:melanin biosynthetic process"/>
    <property type="evidence" value="ECO:0000250"/>
    <property type="project" value="UniProtKB"/>
</dbReference>
<dbReference type="GO" id="GO:0032438">
    <property type="term" value="P:melanosome organization"/>
    <property type="evidence" value="ECO:0007669"/>
    <property type="project" value="TreeGrafter"/>
</dbReference>
<dbReference type="FunFam" id="4.10.760.10:FF:000002">
    <property type="entry name" value="Agouti-signaling protein"/>
    <property type="match status" value="1"/>
</dbReference>
<dbReference type="Gene3D" id="4.10.760.10">
    <property type="entry name" value="Agouti domain"/>
    <property type="match status" value="1"/>
</dbReference>
<dbReference type="InterPro" id="IPR007733">
    <property type="entry name" value="Agouti"/>
</dbReference>
<dbReference type="InterPro" id="IPR027300">
    <property type="entry name" value="Agouti_dom"/>
</dbReference>
<dbReference type="InterPro" id="IPR036836">
    <property type="entry name" value="Agouti_dom_sf"/>
</dbReference>
<dbReference type="PANTHER" id="PTHR16551">
    <property type="entry name" value="AGOUTI RELATED"/>
    <property type="match status" value="1"/>
</dbReference>
<dbReference type="PANTHER" id="PTHR16551:SF1">
    <property type="entry name" value="AGOUTI-SIGNALING PROTEIN"/>
    <property type="match status" value="1"/>
</dbReference>
<dbReference type="Pfam" id="PF05039">
    <property type="entry name" value="Agouti"/>
    <property type="match status" value="1"/>
</dbReference>
<dbReference type="SMART" id="SM00792">
    <property type="entry name" value="Agouti"/>
    <property type="match status" value="1"/>
</dbReference>
<dbReference type="SUPFAM" id="SSF57055">
    <property type="entry name" value="Agouti-related protein"/>
    <property type="match status" value="1"/>
</dbReference>
<dbReference type="PROSITE" id="PS60024">
    <property type="entry name" value="AGOUTI_1"/>
    <property type="match status" value="1"/>
</dbReference>
<dbReference type="PROSITE" id="PS51150">
    <property type="entry name" value="AGOUTI_2"/>
    <property type="match status" value="1"/>
</dbReference>
<gene>
    <name type="primary">ASIP</name>
</gene>
<reference key="1">
    <citation type="submission" date="2007-03" db="EMBL/GenBank/DDBJ databases">
        <title>Association of the agouti signaling protein gene with coat color variation in the macaques.</title>
        <authorList>
            <person name="Nakayama K."/>
            <person name="Shotake T."/>
            <person name="Takenaka O."/>
            <person name="Ishida T."/>
        </authorList>
    </citation>
    <scope>NUCLEOTIDE SEQUENCE [GENOMIC DNA]</scope>
</reference>
<feature type="signal peptide" evidence="4">
    <location>
        <begin position="1"/>
        <end position="22"/>
    </location>
</feature>
<feature type="chain" id="PRO_0000323397" description="Agouti-signaling protein">
    <location>
        <begin position="23"/>
        <end position="132"/>
    </location>
</feature>
<feature type="domain" description="Agouti" evidence="5">
    <location>
        <begin position="93"/>
        <end position="132"/>
    </location>
</feature>
<feature type="region of interest" description="Disordered" evidence="6">
    <location>
        <begin position="62"/>
        <end position="88"/>
    </location>
</feature>
<feature type="compositionally biased region" description="Basic and acidic residues" evidence="6">
    <location>
        <begin position="63"/>
        <end position="79"/>
    </location>
</feature>
<feature type="glycosylation site" description="N-linked (GlcNAc...) asparagine" evidence="4">
    <location>
        <position position="39"/>
    </location>
</feature>
<feature type="disulfide bond" evidence="5">
    <location>
        <begin position="93"/>
        <end position="108"/>
    </location>
</feature>
<feature type="disulfide bond" evidence="5">
    <location>
        <begin position="100"/>
        <end position="114"/>
    </location>
</feature>
<feature type="disulfide bond" evidence="5">
    <location>
        <begin position="107"/>
        <end position="125"/>
    </location>
</feature>
<feature type="disulfide bond" evidence="5">
    <location>
        <begin position="111"/>
        <end position="132"/>
    </location>
</feature>
<feature type="disulfide bond" evidence="5">
    <location>
        <begin position="116"/>
        <end position="123"/>
    </location>
</feature>
<keyword id="KW-1015">Disulfide bond</keyword>
<keyword id="KW-0325">Glycoprotein</keyword>
<keyword id="KW-0960">Knottin</keyword>
<keyword id="KW-0964">Secreted</keyword>
<keyword id="KW-0732">Signal</keyword>
<name>ASIP_MACSI</name>
<accession>A8CEN1</accession>